<sequence>MEFKYNGKVESIELNKYSKTLTQDPTQPATQAMHYGIGFKDEDFKKAQVGIVSMDWDGNPCNMHLGTLGSKIKNSVNQTDGLIGLQFHTIGVSDGIANGKLGMRYSLVSREVIADSIETNAGAEYYDAIVAVPGCDKNMPGSIIGMARLNRPSIMVYGGTIEHGEYKGEKLNIVSAFEALGQKITGNISEEDYHGVICNAIPGQGACGGMYTANTLASAIETLGMSLPYSASNPAVSQEKEDECDEIGLAIKNLLEKDIKPSDIMTKEAFENAITIVMVLGGSTNAVLHIIAMANAIGVEITQDDFQRISDVTPVLGDFKPSGKYMMEDLHKIGGVPAVLKYLLKEGKLHGDCLTVTGKTLAENVETALDLDFDSQDIIRPLENPIKATGHLQILYGNLAEGGSVAKISGKEGEFFKGTARVFDGEQHFIDGIESGRLHAGDVAVIRNIGPVGGPGMPEMLKPTSALIGAGLGKSCALITDGRFSGGTHGFVVGHIVPEAVEGGLIGLVEDDDIIEIDAVNNSISLKVADDEIARRRANYQKPAPKATRGVLAKFAKLTRPASEGCVTDL</sequence>
<dbReference type="EC" id="4.2.1.9" evidence="1"/>
<dbReference type="EMBL" id="CP000425">
    <property type="protein sequence ID" value="ABJ72837.1"/>
    <property type="molecule type" value="Genomic_DNA"/>
</dbReference>
<dbReference type="RefSeq" id="WP_011676306.1">
    <property type="nucleotide sequence ID" value="NC_008527.1"/>
</dbReference>
<dbReference type="SMR" id="Q02YY5"/>
<dbReference type="KEGG" id="llc:LACR_1312"/>
<dbReference type="HOGENOM" id="CLU_014271_4_2_9"/>
<dbReference type="UniPathway" id="UPA00047">
    <property type="reaction ID" value="UER00057"/>
</dbReference>
<dbReference type="UniPathway" id="UPA00049">
    <property type="reaction ID" value="UER00061"/>
</dbReference>
<dbReference type="Proteomes" id="UP000000240">
    <property type="component" value="Chromosome"/>
</dbReference>
<dbReference type="GO" id="GO:0051537">
    <property type="term" value="F:2 iron, 2 sulfur cluster binding"/>
    <property type="evidence" value="ECO:0007669"/>
    <property type="project" value="UniProtKB-UniRule"/>
</dbReference>
<dbReference type="GO" id="GO:0004160">
    <property type="term" value="F:dihydroxy-acid dehydratase activity"/>
    <property type="evidence" value="ECO:0007669"/>
    <property type="project" value="UniProtKB-UniRule"/>
</dbReference>
<dbReference type="GO" id="GO:0000287">
    <property type="term" value="F:magnesium ion binding"/>
    <property type="evidence" value="ECO:0007669"/>
    <property type="project" value="UniProtKB-UniRule"/>
</dbReference>
<dbReference type="GO" id="GO:0009097">
    <property type="term" value="P:isoleucine biosynthetic process"/>
    <property type="evidence" value="ECO:0007669"/>
    <property type="project" value="UniProtKB-UniRule"/>
</dbReference>
<dbReference type="GO" id="GO:0009099">
    <property type="term" value="P:L-valine biosynthetic process"/>
    <property type="evidence" value="ECO:0007669"/>
    <property type="project" value="UniProtKB-UniRule"/>
</dbReference>
<dbReference type="FunFam" id="3.50.30.80:FF:000001">
    <property type="entry name" value="Dihydroxy-acid dehydratase"/>
    <property type="match status" value="1"/>
</dbReference>
<dbReference type="Gene3D" id="3.50.30.80">
    <property type="entry name" value="IlvD/EDD C-terminal domain-like"/>
    <property type="match status" value="1"/>
</dbReference>
<dbReference type="HAMAP" id="MF_00012">
    <property type="entry name" value="IlvD"/>
    <property type="match status" value="1"/>
</dbReference>
<dbReference type="InterPro" id="IPR050165">
    <property type="entry name" value="DHAD_IlvD/Edd"/>
</dbReference>
<dbReference type="InterPro" id="IPR042096">
    <property type="entry name" value="Dihydro-acid_dehy_C"/>
</dbReference>
<dbReference type="InterPro" id="IPR004404">
    <property type="entry name" value="DihydroxyA_deHydtase"/>
</dbReference>
<dbReference type="InterPro" id="IPR020558">
    <property type="entry name" value="DiOHA_6PGluconate_deHydtase_CS"/>
</dbReference>
<dbReference type="InterPro" id="IPR056740">
    <property type="entry name" value="ILV_EDD_C"/>
</dbReference>
<dbReference type="InterPro" id="IPR000581">
    <property type="entry name" value="ILV_EDD_N"/>
</dbReference>
<dbReference type="InterPro" id="IPR037237">
    <property type="entry name" value="IlvD/EDD_N"/>
</dbReference>
<dbReference type="NCBIfam" id="TIGR00110">
    <property type="entry name" value="ilvD"/>
    <property type="match status" value="1"/>
</dbReference>
<dbReference type="NCBIfam" id="NF002068">
    <property type="entry name" value="PRK00911.1"/>
    <property type="match status" value="1"/>
</dbReference>
<dbReference type="PANTHER" id="PTHR21000">
    <property type="entry name" value="DIHYDROXY-ACID DEHYDRATASE DAD"/>
    <property type="match status" value="1"/>
</dbReference>
<dbReference type="PANTHER" id="PTHR21000:SF5">
    <property type="entry name" value="DIHYDROXY-ACID DEHYDRATASE, MITOCHONDRIAL"/>
    <property type="match status" value="1"/>
</dbReference>
<dbReference type="Pfam" id="PF24877">
    <property type="entry name" value="ILV_EDD_C"/>
    <property type="match status" value="1"/>
</dbReference>
<dbReference type="Pfam" id="PF00920">
    <property type="entry name" value="ILVD_EDD_N"/>
    <property type="match status" value="1"/>
</dbReference>
<dbReference type="SUPFAM" id="SSF143975">
    <property type="entry name" value="IlvD/EDD N-terminal domain-like"/>
    <property type="match status" value="1"/>
</dbReference>
<dbReference type="SUPFAM" id="SSF52016">
    <property type="entry name" value="LeuD/IlvD-like"/>
    <property type="match status" value="1"/>
</dbReference>
<dbReference type="PROSITE" id="PS00886">
    <property type="entry name" value="ILVD_EDD_1"/>
    <property type="match status" value="1"/>
</dbReference>
<dbReference type="PROSITE" id="PS00887">
    <property type="entry name" value="ILVD_EDD_2"/>
    <property type="match status" value="1"/>
</dbReference>
<name>ILVD_LACLS</name>
<keyword id="KW-0001">2Fe-2S</keyword>
<keyword id="KW-0028">Amino-acid biosynthesis</keyword>
<keyword id="KW-0100">Branched-chain amino acid biosynthesis</keyword>
<keyword id="KW-0408">Iron</keyword>
<keyword id="KW-0411">Iron-sulfur</keyword>
<keyword id="KW-0456">Lyase</keyword>
<keyword id="KW-0460">Magnesium</keyword>
<keyword id="KW-0479">Metal-binding</keyword>
<feature type="chain" id="PRO_1000000997" description="Dihydroxy-acid dehydratase">
    <location>
        <begin position="1"/>
        <end position="570"/>
    </location>
</feature>
<feature type="active site" description="Proton acceptor" evidence="1">
    <location>
        <position position="485"/>
    </location>
</feature>
<feature type="binding site" evidence="1">
    <location>
        <position position="61"/>
    </location>
    <ligand>
        <name>[2Fe-2S] cluster</name>
        <dbReference type="ChEBI" id="CHEBI:190135"/>
    </ligand>
</feature>
<feature type="binding site" evidence="1">
    <location>
        <position position="94"/>
    </location>
    <ligand>
        <name>Mg(2+)</name>
        <dbReference type="ChEBI" id="CHEBI:18420"/>
    </ligand>
</feature>
<feature type="binding site" evidence="1">
    <location>
        <position position="135"/>
    </location>
    <ligand>
        <name>[2Fe-2S] cluster</name>
        <dbReference type="ChEBI" id="CHEBI:190135"/>
    </ligand>
</feature>
<feature type="binding site" evidence="1">
    <location>
        <position position="136"/>
    </location>
    <ligand>
        <name>Mg(2+)</name>
        <dbReference type="ChEBI" id="CHEBI:18420"/>
    </ligand>
</feature>
<feature type="binding site" description="via carbamate group" evidence="1">
    <location>
        <position position="137"/>
    </location>
    <ligand>
        <name>Mg(2+)</name>
        <dbReference type="ChEBI" id="CHEBI:18420"/>
    </ligand>
</feature>
<feature type="binding site" evidence="1">
    <location>
        <position position="207"/>
    </location>
    <ligand>
        <name>[2Fe-2S] cluster</name>
        <dbReference type="ChEBI" id="CHEBI:190135"/>
    </ligand>
</feature>
<feature type="binding site" evidence="1">
    <location>
        <position position="459"/>
    </location>
    <ligand>
        <name>Mg(2+)</name>
        <dbReference type="ChEBI" id="CHEBI:18420"/>
    </ligand>
</feature>
<feature type="modified residue" description="N6-carboxylysine" evidence="1">
    <location>
        <position position="137"/>
    </location>
</feature>
<reference key="1">
    <citation type="journal article" date="2006" name="Proc. Natl. Acad. Sci. U.S.A.">
        <title>Comparative genomics of the lactic acid bacteria.</title>
        <authorList>
            <person name="Makarova K.S."/>
            <person name="Slesarev A."/>
            <person name="Wolf Y.I."/>
            <person name="Sorokin A."/>
            <person name="Mirkin B."/>
            <person name="Koonin E.V."/>
            <person name="Pavlov A."/>
            <person name="Pavlova N."/>
            <person name="Karamychev V."/>
            <person name="Polouchine N."/>
            <person name="Shakhova V."/>
            <person name="Grigoriev I."/>
            <person name="Lou Y."/>
            <person name="Rohksar D."/>
            <person name="Lucas S."/>
            <person name="Huang K."/>
            <person name="Goodstein D.M."/>
            <person name="Hawkins T."/>
            <person name="Plengvidhya V."/>
            <person name="Welker D."/>
            <person name="Hughes J."/>
            <person name="Goh Y."/>
            <person name="Benson A."/>
            <person name="Baldwin K."/>
            <person name="Lee J.-H."/>
            <person name="Diaz-Muniz I."/>
            <person name="Dosti B."/>
            <person name="Smeianov V."/>
            <person name="Wechter W."/>
            <person name="Barabote R."/>
            <person name="Lorca G."/>
            <person name="Altermann E."/>
            <person name="Barrangou R."/>
            <person name="Ganesan B."/>
            <person name="Xie Y."/>
            <person name="Rawsthorne H."/>
            <person name="Tamir D."/>
            <person name="Parker C."/>
            <person name="Breidt F."/>
            <person name="Broadbent J.R."/>
            <person name="Hutkins R."/>
            <person name="O'Sullivan D."/>
            <person name="Steele J."/>
            <person name="Unlu G."/>
            <person name="Saier M.H. Jr."/>
            <person name="Klaenhammer T."/>
            <person name="Richardson P."/>
            <person name="Kozyavkin S."/>
            <person name="Weimer B.C."/>
            <person name="Mills D.A."/>
        </authorList>
    </citation>
    <scope>NUCLEOTIDE SEQUENCE [LARGE SCALE GENOMIC DNA]</scope>
    <source>
        <strain>SK11</strain>
    </source>
</reference>
<protein>
    <recommendedName>
        <fullName evidence="1">Dihydroxy-acid dehydratase</fullName>
        <shortName evidence="1">DAD</shortName>
        <ecNumber evidence="1">4.2.1.9</ecNumber>
    </recommendedName>
</protein>
<gene>
    <name evidence="1" type="primary">ilvD</name>
    <name type="ordered locus">LACR_1312</name>
</gene>
<comment type="function">
    <text evidence="1">Functions in the biosynthesis of branched-chain amino acids. Catalyzes the dehydration of (2R,3R)-2,3-dihydroxy-3-methylpentanoate (2,3-dihydroxy-3-methylvalerate) into 2-oxo-3-methylpentanoate (2-oxo-3-methylvalerate) and of (2R)-2,3-dihydroxy-3-methylbutanoate (2,3-dihydroxyisovalerate) into 2-oxo-3-methylbutanoate (2-oxoisovalerate), the penultimate precursor to L-isoleucine and L-valine, respectively.</text>
</comment>
<comment type="catalytic activity">
    <reaction evidence="1">
        <text>(2R)-2,3-dihydroxy-3-methylbutanoate = 3-methyl-2-oxobutanoate + H2O</text>
        <dbReference type="Rhea" id="RHEA:24809"/>
        <dbReference type="ChEBI" id="CHEBI:11851"/>
        <dbReference type="ChEBI" id="CHEBI:15377"/>
        <dbReference type="ChEBI" id="CHEBI:49072"/>
        <dbReference type="EC" id="4.2.1.9"/>
    </reaction>
    <physiologicalReaction direction="left-to-right" evidence="1">
        <dbReference type="Rhea" id="RHEA:24810"/>
    </physiologicalReaction>
</comment>
<comment type="catalytic activity">
    <reaction evidence="1">
        <text>(2R,3R)-2,3-dihydroxy-3-methylpentanoate = (S)-3-methyl-2-oxopentanoate + H2O</text>
        <dbReference type="Rhea" id="RHEA:27694"/>
        <dbReference type="ChEBI" id="CHEBI:15377"/>
        <dbReference type="ChEBI" id="CHEBI:35146"/>
        <dbReference type="ChEBI" id="CHEBI:49258"/>
        <dbReference type="EC" id="4.2.1.9"/>
    </reaction>
    <physiologicalReaction direction="left-to-right" evidence="1">
        <dbReference type="Rhea" id="RHEA:27695"/>
    </physiologicalReaction>
</comment>
<comment type="cofactor">
    <cofactor evidence="1">
        <name>[2Fe-2S] cluster</name>
        <dbReference type="ChEBI" id="CHEBI:190135"/>
    </cofactor>
    <text evidence="1">Binds 1 [2Fe-2S] cluster per subunit. This cluster acts as a Lewis acid cofactor.</text>
</comment>
<comment type="cofactor">
    <cofactor evidence="1">
        <name>Mg(2+)</name>
        <dbReference type="ChEBI" id="CHEBI:18420"/>
    </cofactor>
</comment>
<comment type="pathway">
    <text evidence="1">Amino-acid biosynthesis; L-isoleucine biosynthesis; L-isoleucine from 2-oxobutanoate: step 3/4.</text>
</comment>
<comment type="pathway">
    <text evidence="1">Amino-acid biosynthesis; L-valine biosynthesis; L-valine from pyruvate: step 3/4.</text>
</comment>
<comment type="subunit">
    <text evidence="1">Homodimer.</text>
</comment>
<comment type="similarity">
    <text evidence="1">Belongs to the IlvD/Edd family.</text>
</comment>
<organism>
    <name type="scientific">Lactococcus lactis subsp. cremoris (strain SK11)</name>
    <dbReference type="NCBI Taxonomy" id="272622"/>
    <lineage>
        <taxon>Bacteria</taxon>
        <taxon>Bacillati</taxon>
        <taxon>Bacillota</taxon>
        <taxon>Bacilli</taxon>
        <taxon>Lactobacillales</taxon>
        <taxon>Streptococcaceae</taxon>
        <taxon>Lactococcus</taxon>
        <taxon>Lactococcus cremoris subsp. cremoris</taxon>
    </lineage>
</organism>
<evidence type="ECO:0000255" key="1">
    <source>
        <dbReference type="HAMAP-Rule" id="MF_00012"/>
    </source>
</evidence>
<proteinExistence type="inferred from homology"/>
<accession>Q02YY5</accession>